<sequence length="354" mass="39286">MVSSRMASGETILVTGGAGFIGSHTVVQLLKQGFHVSIIDNLYNSVIDAVHRVRLLVGPLLSSNLHFHHGDLRNIHDLDILFSKTKFDAVIHFAGLKGVGESVLNPSNYYDNNLVATINLFQVMSKFNCKKLVISSSATVYGQPDQIPCVEDSNLHAMNPYGRSKLFVEEVARDIQRAEAEWRIILLRYFNPVGAHESGQIGEDPRGLPNNLMPYIQQVAVARLPELNIYGHDYPTKDGTAIRDYIHVMDLADGHIAALRKLFTTDNIGCTAYNLGTGRGTSVLEMVAAFEKASGKKIPIKMCPRRPGDATAVYASTEKAEKELGWKAKYGVEEMCRDQWKWASNNPWGYQGKH</sequence>
<keyword id="KW-0119">Carbohydrate metabolism</keyword>
<keyword id="KW-0299">Galactose metabolism</keyword>
<keyword id="KW-0413">Isomerase</keyword>
<keyword id="KW-0520">NAD</keyword>
<name>GALE1_CYATE</name>
<accession>O65780</accession>
<comment type="catalytic activity">
    <reaction>
        <text>UDP-alpha-D-glucose = UDP-alpha-D-galactose</text>
        <dbReference type="Rhea" id="RHEA:22168"/>
        <dbReference type="ChEBI" id="CHEBI:58885"/>
        <dbReference type="ChEBI" id="CHEBI:66914"/>
        <dbReference type="EC" id="5.1.3.2"/>
    </reaction>
</comment>
<comment type="cofactor">
    <cofactor evidence="1">
        <name>NAD(+)</name>
        <dbReference type="ChEBI" id="CHEBI:57540"/>
    </cofactor>
</comment>
<comment type="pathway">
    <text>Carbohydrate metabolism; galactose metabolism.</text>
</comment>
<comment type="similarity">
    <text evidence="2">Belongs to the NAD(P)-dependent epimerase/dehydratase family.</text>
</comment>
<reference key="1">
    <citation type="submission" date="1998-03" db="EMBL/GenBank/DDBJ databases">
        <title>Isolation and expression of two cDNA clones encoding UDP-galactose epimerase genes expressed in guar endosperm.</title>
        <authorList>
            <person name="Brunstedt J."/>
            <person name="Joersbo M."/>
            <person name="Pedersen S.G."/>
            <person name="Marcussen J."/>
        </authorList>
    </citation>
    <scope>NUCLEOTIDE SEQUENCE [MRNA]</scope>
</reference>
<feature type="chain" id="PRO_0000183196" description="UDP-glucose 4-epimerase GEPI42">
    <location>
        <begin position="1"/>
        <end position="354"/>
    </location>
</feature>
<feature type="active site" description="Proton acceptor" evidence="1">
    <location>
        <position position="161"/>
    </location>
</feature>
<feature type="binding site" evidence="1">
    <location>
        <begin position="11"/>
        <end position="42"/>
    </location>
    <ligand>
        <name>NAD(+)</name>
        <dbReference type="ChEBI" id="CHEBI:57540"/>
    </ligand>
</feature>
<feature type="binding site" evidence="1">
    <location>
        <position position="137"/>
    </location>
    <ligand>
        <name>substrate</name>
    </ligand>
</feature>
<protein>
    <recommendedName>
        <fullName>UDP-glucose 4-epimerase GEPI42</fullName>
        <ecNumber>5.1.3.2</ecNumber>
    </recommendedName>
    <alternativeName>
        <fullName>Galactowaldenase</fullName>
    </alternativeName>
    <alternativeName>
        <fullName>UDP-galactose 4-epimerase</fullName>
    </alternativeName>
</protein>
<dbReference type="EC" id="5.1.3.2"/>
<dbReference type="EMBL" id="AJ005081">
    <property type="protein sequence ID" value="CAA06338.1"/>
    <property type="molecule type" value="mRNA"/>
</dbReference>
<dbReference type="PIR" id="T10496">
    <property type="entry name" value="T10496"/>
</dbReference>
<dbReference type="SMR" id="O65780"/>
<dbReference type="UniPathway" id="UPA00214"/>
<dbReference type="GO" id="GO:0005829">
    <property type="term" value="C:cytosol"/>
    <property type="evidence" value="ECO:0007669"/>
    <property type="project" value="TreeGrafter"/>
</dbReference>
<dbReference type="GO" id="GO:0003978">
    <property type="term" value="F:UDP-glucose 4-epimerase activity"/>
    <property type="evidence" value="ECO:0007669"/>
    <property type="project" value="UniProtKB-EC"/>
</dbReference>
<dbReference type="GO" id="GO:0006012">
    <property type="term" value="P:galactose metabolic process"/>
    <property type="evidence" value="ECO:0007669"/>
    <property type="project" value="UniProtKB-UniPathway"/>
</dbReference>
<dbReference type="CDD" id="cd05247">
    <property type="entry name" value="UDP_G4E_1_SDR_e"/>
    <property type="match status" value="1"/>
</dbReference>
<dbReference type="FunFam" id="3.90.25.10:FF:000060">
    <property type="entry name" value="UDP-glucose 4-epimerase 4"/>
    <property type="match status" value="1"/>
</dbReference>
<dbReference type="Gene3D" id="3.40.50.720">
    <property type="entry name" value="NAD(P)-binding Rossmann-like Domain"/>
    <property type="match status" value="1"/>
</dbReference>
<dbReference type="Gene3D" id="3.90.25.10">
    <property type="entry name" value="UDP-galactose 4-epimerase, domain 1"/>
    <property type="match status" value="1"/>
</dbReference>
<dbReference type="InterPro" id="IPR016040">
    <property type="entry name" value="NAD(P)-bd_dom"/>
</dbReference>
<dbReference type="InterPro" id="IPR036291">
    <property type="entry name" value="NAD(P)-bd_dom_sf"/>
</dbReference>
<dbReference type="InterPro" id="IPR005886">
    <property type="entry name" value="UDP_G4E"/>
</dbReference>
<dbReference type="NCBIfam" id="TIGR01179">
    <property type="entry name" value="galE"/>
    <property type="match status" value="1"/>
</dbReference>
<dbReference type="NCBIfam" id="NF007956">
    <property type="entry name" value="PRK10675.1"/>
    <property type="match status" value="1"/>
</dbReference>
<dbReference type="PANTHER" id="PTHR43725:SF15">
    <property type="entry name" value="BIFUNCTIONAL UDP-GLUCOSE 4-EPIMERASE AND UDP-XYLOSE 4-EPIMERASE 1"/>
    <property type="match status" value="1"/>
</dbReference>
<dbReference type="PANTHER" id="PTHR43725">
    <property type="entry name" value="UDP-GLUCOSE 4-EPIMERASE"/>
    <property type="match status" value="1"/>
</dbReference>
<dbReference type="Pfam" id="PF16363">
    <property type="entry name" value="GDP_Man_Dehyd"/>
    <property type="match status" value="1"/>
</dbReference>
<dbReference type="SUPFAM" id="SSF51735">
    <property type="entry name" value="NAD(P)-binding Rossmann-fold domains"/>
    <property type="match status" value="1"/>
</dbReference>
<evidence type="ECO:0000250" key="1"/>
<evidence type="ECO:0000305" key="2"/>
<proteinExistence type="evidence at transcript level"/>
<organism>
    <name type="scientific">Cyamopsis tetragonoloba</name>
    <name type="common">Guar</name>
    <name type="synonym">Cluster bean</name>
    <dbReference type="NCBI Taxonomy" id="3832"/>
    <lineage>
        <taxon>Eukaryota</taxon>
        <taxon>Viridiplantae</taxon>
        <taxon>Streptophyta</taxon>
        <taxon>Embryophyta</taxon>
        <taxon>Tracheophyta</taxon>
        <taxon>Spermatophyta</taxon>
        <taxon>Magnoliopsida</taxon>
        <taxon>eudicotyledons</taxon>
        <taxon>Gunneridae</taxon>
        <taxon>Pentapetalae</taxon>
        <taxon>rosids</taxon>
        <taxon>fabids</taxon>
        <taxon>Fabales</taxon>
        <taxon>Fabaceae</taxon>
        <taxon>Papilionoideae</taxon>
        <taxon>50 kb inversion clade</taxon>
        <taxon>NPAAA clade</taxon>
        <taxon>indigoferoid/millettioid clade</taxon>
        <taxon>Indigofereae</taxon>
        <taxon>Cyamopsis</taxon>
    </lineage>
</organism>